<comment type="function">
    <text evidence="1 7 8 9 11 12 14 15 16 18 19 20">Guanine nucleotide-binding proteins (G proteins) are involved as modulators or transducers in various transmembrane signaling systems (PubMed:12515866, PubMed:15240885, PubMed:15525651, PubMed:16705036, PubMed:16787920, PubMed:17565996, PubMed:22609986, PubMed:23762476, PubMed:27084452). Activates effector molecule RhoA by binding and activating RhoGEFs (ARHGEF12/LARG) (PubMed:12515866, PubMed:15240885, PubMed:16202387). GNA12-dependent Rho signaling subsequently regulates transcription factor AP-1 (activating protein-1) (By similarity). GNA12-dependent Rho signaling also regulates protein phosphatese 2A activation causing dephosphorylation of its target proteins (PubMed:15525651, PubMed:17565996). Promotes tumor cell invasion and metastasis by activating RhoA/ROCK signaling pathway and up-regulating pro-inflammatory cytokine production (PubMed:16705036, PubMed:16787920, PubMed:23762476, PubMed:27084452). Inhibits CDH1-mediated cell adhesion in process independent from Rho activation (PubMed:11976333, PubMed:16787920). Together with NAPA promotes CDH5 localization to plasma membrane (PubMed:15980433). May play a role in the control of cell migration through the TOR signaling cascade (PubMed:22609986).</text>
</comment>
<comment type="subunit">
    <text evidence="1 5 6 9 11 12 13 17">G proteins are composed of 3 units; alpha, beta and gamma (PubMed:10026210). The alpha chain contains the guanine nucleotide binding site (By similarity). Interacts with UBXD5 (PubMed:16202387). Interacts (in GTP-bound form) with PPP5C (via TPR repeats); activates PPP5C phosphatase activity and translocates PPP5C to the cell membrane. Interacts with RGS22 (PubMed:18703424). Interacts (via N-terminus) with NAPA; the interaction promotes CDH5 localization to plasma membrane (PubMed:15980433). Interacts with CTNND1 (via N-terminus); the interaction regulates CDH1-mediated cell-cell adhesion (PubMed:15240885). Interacts with PPP2R1A; the interaction promotes protein phosphatase 2A activation causing dephosphorylation of MAPT (PubMed:15525651). Interacts (in GTP-bound form) with ARHGEF1 (By similarity). Interacts (in GTP-bound form) with ARHGEF11 (via RGS domain) (PubMed:10026210). Interacts (in GTP-bound form) with ARHGEF12 (via RGS domain) (PubMed:11094164).</text>
</comment>
<comment type="subcellular location">
    <subcellularLocation>
        <location evidence="9 12">Cell membrane</location>
        <topology evidence="3">Lipid-anchor</topology>
    </subcellularLocation>
    <subcellularLocation>
        <location evidence="11">Lateral cell membrane</location>
        <topology evidence="3">Lipid-anchor</topology>
    </subcellularLocation>
    <subcellularLocation>
        <location evidence="9">Cytoplasm</location>
    </subcellularLocation>
    <text evidence="9">CDH1 enhances cell membrane localization.</text>
</comment>
<comment type="alternative products">
    <event type="alternative initiation"/>
    <isoform>
        <id>Q03113-1</id>
        <name>1</name>
        <sequence type="displayed"/>
    </isoform>
    <isoform>
        <id>Q03113-2</id>
        <name>2</name>
        <sequence type="described" ref="VSP_055171"/>
    </isoform>
    <isoform>
        <id>Q03113-3</id>
        <name>3</name>
        <sequence type="described" ref="VSP_055230 VSP_055231"/>
    </isoform>
</comment>
<comment type="similarity">
    <text evidence="22">Belongs to the G-alpha family. G(12) subfamily.</text>
</comment>
<keyword id="KW-0002">3D-structure</keyword>
<keyword id="KW-0024">Alternative initiation</keyword>
<keyword id="KW-1003">Cell membrane</keyword>
<keyword id="KW-0963">Cytoplasm</keyword>
<keyword id="KW-0342">GTP-binding</keyword>
<keyword id="KW-0449">Lipoprotein</keyword>
<keyword id="KW-0460">Magnesium</keyword>
<keyword id="KW-0472">Membrane</keyword>
<keyword id="KW-0479">Metal-binding</keyword>
<keyword id="KW-0547">Nucleotide-binding</keyword>
<keyword id="KW-0564">Palmitate</keyword>
<keyword id="KW-0597">Phosphoprotein</keyword>
<keyword id="KW-1267">Proteomics identification</keyword>
<keyword id="KW-1185">Reference proteome</keyword>
<keyword id="KW-0807">Transducer</keyword>
<sequence length="381" mass="44279">MSGVVRTLSRCLLPAEAGGARERRAGSGARDAEREARRRSRDIDALLARERRAVRRLVKILLLGAGESGKSTFLKQMRIIHGREFDQKALLEFRDTIFDNILKGSRVLVDARDKLGIPWQYSENEKHGMFLMAFENKAGLPVEPATFQLYVPALSALWRDSGIREAFSRRSEFQLGESVKYFLDNLDRIGQLNYFPSKQDILLARKATKGIVEHDFVIKKIPFKMVDVGGQRSQRQKWFQCFDGITSILFMVSSSEYDQVLMEDRRTNRLVESMNIFETIVNNKLFFNVSIILFLNKMDLLVEKVKTVSIKKHFPDFRGDPHRLEDVQRYLVQCFDRKRRNRSKPLFHHFTTAIDTENVRFVFHAVKDTILQENLKDIMLQ</sequence>
<organism>
    <name type="scientific">Homo sapiens</name>
    <name type="common">Human</name>
    <dbReference type="NCBI Taxonomy" id="9606"/>
    <lineage>
        <taxon>Eukaryota</taxon>
        <taxon>Metazoa</taxon>
        <taxon>Chordata</taxon>
        <taxon>Craniata</taxon>
        <taxon>Vertebrata</taxon>
        <taxon>Euteleostomi</taxon>
        <taxon>Mammalia</taxon>
        <taxon>Eutheria</taxon>
        <taxon>Euarchontoglires</taxon>
        <taxon>Primates</taxon>
        <taxon>Haplorrhini</taxon>
        <taxon>Catarrhini</taxon>
        <taxon>Hominidae</taxon>
        <taxon>Homo</taxon>
    </lineage>
</organism>
<protein>
    <recommendedName>
        <fullName>Guanine nucleotide-binding protein subunit alpha-12</fullName>
        <shortName>G alpha-12</shortName>
        <shortName>G-protein subunit alpha-12</shortName>
    </recommendedName>
</protein>
<gene>
    <name type="primary">GNA12</name>
</gene>
<proteinExistence type="evidence at protein level"/>
<feature type="chain" id="PRO_0000203770" description="Guanine nucleotide-binding protein subunit alpha-12">
    <location>
        <begin position="1"/>
        <end position="381"/>
    </location>
</feature>
<feature type="domain" description="G-alpha" evidence="4">
    <location>
        <begin position="56"/>
        <end position="381"/>
    </location>
</feature>
<feature type="region of interest" description="G1 motif" evidence="4">
    <location>
        <begin position="59"/>
        <end position="72"/>
    </location>
</feature>
<feature type="region of interest" description="G2 motif" evidence="4">
    <location>
        <begin position="200"/>
        <end position="208"/>
    </location>
</feature>
<feature type="region of interest" description="G3 motif" evidence="4">
    <location>
        <begin position="223"/>
        <end position="232"/>
    </location>
</feature>
<feature type="region of interest" description="G4 motif" evidence="4">
    <location>
        <begin position="292"/>
        <end position="299"/>
    </location>
</feature>
<feature type="region of interest" description="G5 motif" evidence="4">
    <location>
        <begin position="351"/>
        <end position="356"/>
    </location>
</feature>
<feature type="binding site" evidence="1">
    <location>
        <begin position="67"/>
        <end position="72"/>
    </location>
    <ligand>
        <name>GTP</name>
        <dbReference type="ChEBI" id="CHEBI:37565"/>
    </ligand>
</feature>
<feature type="binding site" evidence="1">
    <location>
        <position position="71"/>
    </location>
    <ligand>
        <name>Mg(2+)</name>
        <dbReference type="ChEBI" id="CHEBI:18420"/>
    </ligand>
</feature>
<feature type="binding site" evidence="1">
    <location>
        <begin position="202"/>
        <end position="205"/>
    </location>
    <ligand>
        <name>GTP</name>
        <dbReference type="ChEBI" id="CHEBI:37565"/>
    </ligand>
</feature>
<feature type="binding site" evidence="1">
    <location>
        <position position="208"/>
    </location>
    <ligand>
        <name>Mg(2+)</name>
        <dbReference type="ChEBI" id="CHEBI:18420"/>
    </ligand>
</feature>
<feature type="binding site" evidence="1">
    <location>
        <begin position="296"/>
        <end position="299"/>
    </location>
    <ligand>
        <name>GTP</name>
        <dbReference type="ChEBI" id="CHEBI:37565"/>
    </ligand>
</feature>
<feature type="binding site" evidence="1">
    <location>
        <position position="353"/>
    </location>
    <ligand>
        <name>GTP</name>
        <dbReference type="ChEBI" id="CHEBI:37565"/>
    </ligand>
</feature>
<feature type="modified residue" description="Phosphothreonine" evidence="2">
    <location>
        <position position="208"/>
    </location>
</feature>
<feature type="lipid moiety-binding region" description="S-palmitoyl cysteine" evidence="1">
    <location>
        <position position="11"/>
    </location>
</feature>
<feature type="splice variant" id="VSP_055171" description="In isoform 2." evidence="21">
    <original>MSGVVRTLSRCLLPAEAGGARERRAGSGARDAEREARRRSRDIDALLARERRAVRRLVKILLLGAGESGKSTFLKQMRIIHGREFDQKALLEFRDTIFDNILK</original>
    <variation>MKRRMFPRPCLARMPGSRGSGSTPDGNRKCCRFEHLLIAHPGSR</variation>
    <location>
        <begin position="1"/>
        <end position="103"/>
    </location>
</feature>
<feature type="splice variant" id="VSP_055230" description="In isoform 3." evidence="21">
    <location>
        <begin position="1"/>
        <end position="76"/>
    </location>
</feature>
<feature type="splice variant" id="VSP_055231" description="In isoform 3." evidence="21">
    <location>
        <begin position="174"/>
        <end position="190"/>
    </location>
</feature>
<feature type="sequence variant" id="VAR_071044" description="In dbSNP:rs11552939." evidence="10">
    <original>S</original>
    <variation>G</variation>
    <location>
        <position position="68"/>
    </location>
</feature>
<feature type="sequence variant" id="VAR_049359" description="In dbSNP:rs45606633.">
    <original>F</original>
    <variation>L</variation>
    <location>
        <position position="242"/>
    </location>
</feature>
<feature type="sequence variant" id="VAR_049360" description="In dbSNP:rs45583847.">
    <original>Y</original>
    <variation>H</variation>
    <location>
        <position position="330"/>
    </location>
</feature>
<feature type="sequence conflict" description="In Ref. 2; AAM12615." evidence="22" ref="2">
    <original>K</original>
    <variation>E</variation>
    <location>
        <position position="126"/>
    </location>
</feature>
<feature type="sequence conflict" description="In Ref. 1; AAA35867." evidence="22" ref="1">
    <original>R</original>
    <variation>Q</variation>
    <location>
        <position position="323"/>
    </location>
</feature>
<feature type="helix" evidence="23">
    <location>
        <begin position="45"/>
        <end position="54"/>
    </location>
</feature>
<feature type="strand" evidence="23">
    <location>
        <begin position="58"/>
        <end position="63"/>
    </location>
</feature>
<feature type="helix" evidence="23">
    <location>
        <begin position="67"/>
        <end position="81"/>
    </location>
</feature>
<feature type="strand" evidence="23">
    <location>
        <begin position="214"/>
        <end position="220"/>
    </location>
</feature>
<feature type="strand" evidence="23">
    <location>
        <begin position="222"/>
        <end position="225"/>
    </location>
</feature>
<feature type="helix" evidence="23">
    <location>
        <begin position="235"/>
        <end position="238"/>
    </location>
</feature>
<feature type="helix" evidence="23">
    <location>
        <begin position="239"/>
        <end position="241"/>
    </location>
</feature>
<feature type="strand" evidence="23">
    <location>
        <begin position="247"/>
        <end position="253"/>
    </location>
</feature>
<feature type="helix" evidence="23">
    <location>
        <begin position="270"/>
        <end position="281"/>
    </location>
</feature>
<feature type="helix" evidence="23">
    <location>
        <begin position="284"/>
        <end position="286"/>
    </location>
</feature>
<feature type="strand" evidence="23">
    <location>
        <begin position="290"/>
        <end position="296"/>
    </location>
</feature>
<feature type="helix" evidence="23">
    <location>
        <begin position="298"/>
        <end position="306"/>
    </location>
</feature>
<feature type="strand" evidence="23">
    <location>
        <begin position="312"/>
        <end position="314"/>
    </location>
</feature>
<feature type="helix" evidence="23">
    <location>
        <begin position="324"/>
        <end position="326"/>
    </location>
</feature>
<feature type="helix" evidence="23">
    <location>
        <begin position="327"/>
        <end position="336"/>
    </location>
</feature>
<feature type="helix" evidence="23">
    <location>
        <begin position="355"/>
        <end position="377"/>
    </location>
</feature>
<evidence type="ECO:0000250" key="1">
    <source>
        <dbReference type="UniProtKB" id="P27600"/>
    </source>
</evidence>
<evidence type="ECO:0000250" key="2">
    <source>
        <dbReference type="UniProtKB" id="Q14344"/>
    </source>
</evidence>
<evidence type="ECO:0000250" key="3">
    <source>
        <dbReference type="UniProtKB" id="Q63210"/>
    </source>
</evidence>
<evidence type="ECO:0000255" key="4">
    <source>
        <dbReference type="PROSITE-ProRule" id="PRU01230"/>
    </source>
</evidence>
<evidence type="ECO:0000269" key="5">
    <source>
    </source>
</evidence>
<evidence type="ECO:0000269" key="6">
    <source>
    </source>
</evidence>
<evidence type="ECO:0000269" key="7">
    <source>
    </source>
</evidence>
<evidence type="ECO:0000269" key="8">
    <source>
    </source>
</evidence>
<evidence type="ECO:0000269" key="9">
    <source>
    </source>
</evidence>
<evidence type="ECO:0000269" key="10">
    <source>
    </source>
</evidence>
<evidence type="ECO:0000269" key="11">
    <source>
    </source>
</evidence>
<evidence type="ECO:0000269" key="12">
    <source>
    </source>
</evidence>
<evidence type="ECO:0000269" key="13">
    <source>
    </source>
</evidence>
<evidence type="ECO:0000269" key="14">
    <source>
    </source>
</evidence>
<evidence type="ECO:0000269" key="15">
    <source>
    </source>
</evidence>
<evidence type="ECO:0000269" key="16">
    <source>
    </source>
</evidence>
<evidence type="ECO:0000269" key="17">
    <source>
    </source>
</evidence>
<evidence type="ECO:0000269" key="18">
    <source>
    </source>
</evidence>
<evidence type="ECO:0000269" key="19">
    <source>
    </source>
</evidence>
<evidence type="ECO:0000269" key="20">
    <source>
    </source>
</evidence>
<evidence type="ECO:0000303" key="21">
    <source>
    </source>
</evidence>
<evidence type="ECO:0000305" key="22"/>
<evidence type="ECO:0007829" key="23">
    <source>
        <dbReference type="PDB" id="7YDJ"/>
    </source>
</evidence>
<name>GNA12_HUMAN</name>
<dbReference type="EMBL" id="L01694">
    <property type="protein sequence ID" value="AAA35867.1"/>
    <property type="molecule type" value="mRNA"/>
</dbReference>
<dbReference type="EMBL" id="AF493901">
    <property type="protein sequence ID" value="AAM12615.1"/>
    <property type="molecule type" value="mRNA"/>
</dbReference>
<dbReference type="EMBL" id="AK127842">
    <property type="protein sequence ID" value="BAG54584.1"/>
    <property type="molecule type" value="mRNA"/>
</dbReference>
<dbReference type="EMBL" id="AK295830">
    <property type="protein sequence ID" value="BAH12193.1"/>
    <property type="molecule type" value="mRNA"/>
</dbReference>
<dbReference type="EMBL" id="AC006028">
    <property type="protein sequence ID" value="AAP21870.1"/>
    <property type="molecule type" value="Genomic_DNA"/>
</dbReference>
<dbReference type="EMBL" id="AC004933">
    <property type="protein sequence ID" value="AAD05026.1"/>
    <property type="molecule type" value="Genomic_DNA"/>
</dbReference>
<dbReference type="EMBL" id="CH236953">
    <property type="protein sequence ID" value="EAL23961.1"/>
    <property type="molecule type" value="Genomic_DNA"/>
</dbReference>
<dbReference type="EMBL" id="BC087537">
    <property type="protein sequence ID" value="AAH87537.1"/>
    <property type="molecule type" value="mRNA"/>
</dbReference>
<dbReference type="EMBL" id="BC111464">
    <property type="protein sequence ID" value="AAI11465.1"/>
    <property type="molecule type" value="mRNA"/>
</dbReference>
<dbReference type="CCDS" id="CCDS5335.1">
    <molecule id="Q03113-1"/>
</dbReference>
<dbReference type="CCDS" id="CCDS64584.1">
    <molecule id="Q03113-2"/>
</dbReference>
<dbReference type="PIR" id="A48071">
    <property type="entry name" value="A48071"/>
</dbReference>
<dbReference type="RefSeq" id="NP_001269370.1">
    <molecule id="Q03113-2"/>
    <property type="nucleotide sequence ID" value="NM_001282441.2"/>
</dbReference>
<dbReference type="RefSeq" id="NP_001280021.1">
    <property type="nucleotide sequence ID" value="NM_001293092.1"/>
</dbReference>
<dbReference type="RefSeq" id="NP_031379.2">
    <molecule id="Q03113-1"/>
    <property type="nucleotide sequence ID" value="NM_007353.2"/>
</dbReference>
<dbReference type="PDB" id="7YDJ">
    <property type="method" value="EM"/>
    <property type="resolution" value="3.03 A"/>
    <property type="chains" value="A=45-83, A=209-255, A=270-381"/>
</dbReference>
<dbReference type="PDBsum" id="7YDJ"/>
<dbReference type="SMR" id="Q03113"/>
<dbReference type="BioGRID" id="109030">
    <property type="interactions" value="47"/>
</dbReference>
<dbReference type="CORUM" id="Q03113"/>
<dbReference type="FunCoup" id="Q03113">
    <property type="interactions" value="996"/>
</dbReference>
<dbReference type="IntAct" id="Q03113">
    <property type="interactions" value="18"/>
</dbReference>
<dbReference type="MINT" id="Q03113"/>
<dbReference type="STRING" id="9606.ENSP00000275364"/>
<dbReference type="ChEMBL" id="CHEMBL3308913"/>
<dbReference type="iPTMnet" id="Q03113"/>
<dbReference type="PhosphoSitePlus" id="Q03113"/>
<dbReference type="SwissPalm" id="Q03113"/>
<dbReference type="BioMuta" id="GNA12"/>
<dbReference type="DMDM" id="38258934"/>
<dbReference type="jPOST" id="Q03113"/>
<dbReference type="MassIVE" id="Q03113"/>
<dbReference type="PaxDb" id="9606-ENSP00000275364"/>
<dbReference type="PeptideAtlas" id="Q03113"/>
<dbReference type="ProteomicsDB" id="3818"/>
<dbReference type="ProteomicsDB" id="58191">
    <molecule id="Q03113-1"/>
</dbReference>
<dbReference type="ProteomicsDB" id="6518"/>
<dbReference type="Pumba" id="Q03113"/>
<dbReference type="Antibodypedia" id="4103">
    <property type="antibodies" value="218 antibodies from 30 providers"/>
</dbReference>
<dbReference type="DNASU" id="2768"/>
<dbReference type="Ensembl" id="ENST00000275364.8">
    <molecule id="Q03113-1"/>
    <property type="protein sequence ID" value="ENSP00000275364.3"/>
    <property type="gene ID" value="ENSG00000146535.15"/>
</dbReference>
<dbReference type="Ensembl" id="ENST00000407904.7">
    <molecule id="Q03113-2"/>
    <property type="protein sequence ID" value="ENSP00000385935.3"/>
    <property type="gene ID" value="ENSG00000146535.15"/>
</dbReference>
<dbReference type="Ensembl" id="ENST00000715274.1">
    <molecule id="Q03113-1"/>
    <property type="protein sequence ID" value="ENSP00000520443.1"/>
    <property type="gene ID" value="ENSG00000146535.15"/>
</dbReference>
<dbReference type="GeneID" id="2768"/>
<dbReference type="KEGG" id="hsa:2768"/>
<dbReference type="MANE-Select" id="ENST00000275364.8">
    <property type="protein sequence ID" value="ENSP00000275364.3"/>
    <property type="RefSeq nucleotide sequence ID" value="NM_007353.3"/>
    <property type="RefSeq protein sequence ID" value="NP_031379.2"/>
</dbReference>
<dbReference type="UCSC" id="uc003smt.5">
    <molecule id="Q03113-1"/>
    <property type="organism name" value="human"/>
</dbReference>
<dbReference type="AGR" id="HGNC:4380"/>
<dbReference type="CTD" id="2768"/>
<dbReference type="DisGeNET" id="2768"/>
<dbReference type="GeneCards" id="GNA12"/>
<dbReference type="HGNC" id="HGNC:4380">
    <property type="gene designation" value="GNA12"/>
</dbReference>
<dbReference type="HPA" id="ENSG00000146535">
    <property type="expression patterns" value="Low tissue specificity"/>
</dbReference>
<dbReference type="MalaCards" id="GNA12"/>
<dbReference type="MIM" id="604394">
    <property type="type" value="gene"/>
</dbReference>
<dbReference type="neXtProt" id="NX_Q03113"/>
<dbReference type="OpenTargets" id="ENSG00000146535"/>
<dbReference type="PharmGKB" id="PA28765"/>
<dbReference type="VEuPathDB" id="HostDB:ENSG00000146535"/>
<dbReference type="eggNOG" id="KOG0082">
    <property type="taxonomic scope" value="Eukaryota"/>
</dbReference>
<dbReference type="GeneTree" id="ENSGT00940000157636"/>
<dbReference type="HOGENOM" id="CLU_014184_3_1_1"/>
<dbReference type="InParanoid" id="Q03113"/>
<dbReference type="OMA" id="IMRRQIN"/>
<dbReference type="OrthoDB" id="5817230at2759"/>
<dbReference type="PAN-GO" id="Q03113">
    <property type="GO annotations" value="7 GO annotations based on evolutionary models"/>
</dbReference>
<dbReference type="PhylomeDB" id="Q03113"/>
<dbReference type="TreeFam" id="TF300673"/>
<dbReference type="PathwayCommons" id="Q03113"/>
<dbReference type="Reactome" id="R-HSA-416482">
    <property type="pathway name" value="G alpha (12/13) signalling events"/>
</dbReference>
<dbReference type="Reactome" id="R-HSA-456926">
    <property type="pathway name" value="Thrombin signalling through proteinase activated receptors (PARs)"/>
</dbReference>
<dbReference type="SignaLink" id="Q03113"/>
<dbReference type="SIGNOR" id="Q03113"/>
<dbReference type="BioGRID-ORCS" id="2768">
    <property type="hits" value="31 hits in 1161 CRISPR screens"/>
</dbReference>
<dbReference type="ChiTaRS" id="GNA12">
    <property type="organism name" value="human"/>
</dbReference>
<dbReference type="GeneWiki" id="GNA12"/>
<dbReference type="GenomeRNAi" id="2768"/>
<dbReference type="Pharos" id="Q03113">
    <property type="development level" value="Tbio"/>
</dbReference>
<dbReference type="PRO" id="PR:Q03113"/>
<dbReference type="Proteomes" id="UP000005640">
    <property type="component" value="Chromosome 7"/>
</dbReference>
<dbReference type="RNAct" id="Q03113">
    <property type="molecule type" value="protein"/>
</dbReference>
<dbReference type="Bgee" id="ENSG00000146535">
    <property type="expression patterns" value="Expressed in secondary oocyte and 193 other cell types or tissues"/>
</dbReference>
<dbReference type="ExpressionAtlas" id="Q03113">
    <property type="expression patterns" value="baseline and differential"/>
</dbReference>
<dbReference type="GO" id="GO:0031526">
    <property type="term" value="C:brush border membrane"/>
    <property type="evidence" value="ECO:0000318"/>
    <property type="project" value="GO_Central"/>
</dbReference>
<dbReference type="GO" id="GO:0005737">
    <property type="term" value="C:cytoplasm"/>
    <property type="evidence" value="ECO:0000318"/>
    <property type="project" value="GO_Central"/>
</dbReference>
<dbReference type="GO" id="GO:0005925">
    <property type="term" value="C:focal adhesion"/>
    <property type="evidence" value="ECO:0007005"/>
    <property type="project" value="UniProtKB"/>
</dbReference>
<dbReference type="GO" id="GO:0005834">
    <property type="term" value="C:heterotrimeric G-protein complex"/>
    <property type="evidence" value="ECO:0000318"/>
    <property type="project" value="GO_Central"/>
</dbReference>
<dbReference type="GO" id="GO:0016328">
    <property type="term" value="C:lateral plasma membrane"/>
    <property type="evidence" value="ECO:0000314"/>
    <property type="project" value="UniProtKB"/>
</dbReference>
<dbReference type="GO" id="GO:0043005">
    <property type="term" value="C:neuron projection"/>
    <property type="evidence" value="ECO:0000314"/>
    <property type="project" value="UniProtKB"/>
</dbReference>
<dbReference type="GO" id="GO:0043025">
    <property type="term" value="C:neuronal cell body"/>
    <property type="evidence" value="ECO:0000314"/>
    <property type="project" value="UniProtKB"/>
</dbReference>
<dbReference type="GO" id="GO:0005886">
    <property type="term" value="C:plasma membrane"/>
    <property type="evidence" value="ECO:0000304"/>
    <property type="project" value="Reactome"/>
</dbReference>
<dbReference type="GO" id="GO:0031752">
    <property type="term" value="F:D5 dopamine receptor binding"/>
    <property type="evidence" value="ECO:0000318"/>
    <property type="project" value="GO_Central"/>
</dbReference>
<dbReference type="GO" id="GO:0003925">
    <property type="term" value="F:G protein activity"/>
    <property type="evidence" value="ECO:0000314"/>
    <property type="project" value="UniProtKB"/>
</dbReference>
<dbReference type="GO" id="GO:0031683">
    <property type="term" value="F:G-protein beta/gamma-subunit complex binding"/>
    <property type="evidence" value="ECO:0000318"/>
    <property type="project" value="GO_Central"/>
</dbReference>
<dbReference type="GO" id="GO:0005525">
    <property type="term" value="F:GTP binding"/>
    <property type="evidence" value="ECO:0007669"/>
    <property type="project" value="UniProtKB-KW"/>
</dbReference>
<dbReference type="GO" id="GO:0003924">
    <property type="term" value="F:GTPase activity"/>
    <property type="evidence" value="ECO:0000318"/>
    <property type="project" value="GO_Central"/>
</dbReference>
<dbReference type="GO" id="GO:0046872">
    <property type="term" value="F:metal ion binding"/>
    <property type="evidence" value="ECO:0007669"/>
    <property type="project" value="UniProtKB-KW"/>
</dbReference>
<dbReference type="GO" id="GO:0051721">
    <property type="term" value="F:protein phosphatase 2A binding"/>
    <property type="evidence" value="ECO:0000353"/>
    <property type="project" value="UniProtKB"/>
</dbReference>
<dbReference type="GO" id="GO:0072542">
    <property type="term" value="F:protein phosphatase activator activity"/>
    <property type="evidence" value="ECO:0000314"/>
    <property type="project" value="UniProtKB"/>
</dbReference>
<dbReference type="GO" id="GO:0007188">
    <property type="term" value="P:adenylate cyclase-modulating G protein-coupled receptor signaling pathway"/>
    <property type="evidence" value="ECO:0000318"/>
    <property type="project" value="GO_Central"/>
</dbReference>
<dbReference type="GO" id="GO:0007596">
    <property type="term" value="P:blood coagulation"/>
    <property type="evidence" value="ECO:0000304"/>
    <property type="project" value="ProtInc"/>
</dbReference>
<dbReference type="GO" id="GO:0030154">
    <property type="term" value="P:cell differentiation"/>
    <property type="evidence" value="ECO:0007669"/>
    <property type="project" value="Ensembl"/>
</dbReference>
<dbReference type="GO" id="GO:0042733">
    <property type="term" value="P:embryonic digit morphogenesis"/>
    <property type="evidence" value="ECO:0007669"/>
    <property type="project" value="Ensembl"/>
</dbReference>
<dbReference type="GO" id="GO:0007186">
    <property type="term" value="P:G protein-coupled receptor signaling pathway"/>
    <property type="evidence" value="ECO:0000304"/>
    <property type="project" value="ProtInc"/>
</dbReference>
<dbReference type="GO" id="GO:0001701">
    <property type="term" value="P:in utero embryonic development"/>
    <property type="evidence" value="ECO:0007669"/>
    <property type="project" value="Ensembl"/>
</dbReference>
<dbReference type="GO" id="GO:1904753">
    <property type="term" value="P:negative regulation of vascular associated smooth muscle cell migration"/>
    <property type="evidence" value="ECO:0007669"/>
    <property type="project" value="Ensembl"/>
</dbReference>
<dbReference type="GO" id="GO:1904706">
    <property type="term" value="P:negative regulation of vascular associated smooth muscle cell proliferation"/>
    <property type="evidence" value="ECO:0007669"/>
    <property type="project" value="Ensembl"/>
</dbReference>
<dbReference type="GO" id="GO:0008217">
    <property type="term" value="P:regulation of blood pressure"/>
    <property type="evidence" value="ECO:0007669"/>
    <property type="project" value="Ensembl"/>
</dbReference>
<dbReference type="GO" id="GO:0008360">
    <property type="term" value="P:regulation of cell shape"/>
    <property type="evidence" value="ECO:0007669"/>
    <property type="project" value="Ensembl"/>
</dbReference>
<dbReference type="GO" id="GO:0010762">
    <property type="term" value="P:regulation of fibroblast migration"/>
    <property type="evidence" value="ECO:0000250"/>
    <property type="project" value="UniProtKB"/>
</dbReference>
<dbReference type="GO" id="GO:0032434">
    <property type="term" value="P:regulation of proteasomal ubiquitin-dependent protein catabolic process"/>
    <property type="evidence" value="ECO:0000315"/>
    <property type="project" value="UniProtKB"/>
</dbReference>
<dbReference type="GO" id="GO:0032006">
    <property type="term" value="P:regulation of TOR signaling"/>
    <property type="evidence" value="ECO:0000315"/>
    <property type="project" value="UniProtKB"/>
</dbReference>
<dbReference type="GO" id="GO:0009410">
    <property type="term" value="P:response to xenobiotic stimulus"/>
    <property type="evidence" value="ECO:0007669"/>
    <property type="project" value="Ensembl"/>
</dbReference>
<dbReference type="GO" id="GO:0007266">
    <property type="term" value="P:Rho protein signal transduction"/>
    <property type="evidence" value="ECO:0000318"/>
    <property type="project" value="GO_Central"/>
</dbReference>
<dbReference type="GO" id="GO:0160221">
    <property type="term" value="P:Rho-activating G protein-coupled receptor signaling pathway"/>
    <property type="evidence" value="ECO:0000314"/>
    <property type="project" value="UniProtKB"/>
</dbReference>
<dbReference type="CDD" id="cd00066">
    <property type="entry name" value="G-alpha"/>
    <property type="match status" value="1"/>
</dbReference>
<dbReference type="FunFam" id="3.40.50.300:FF:000692">
    <property type="entry name" value="Guanine nucleotide-binding protein subunit alpha"/>
    <property type="match status" value="1"/>
</dbReference>
<dbReference type="FunFam" id="1.10.400.10:FF:000004">
    <property type="entry name" value="Guanine nucleotide-binding protein subunit alpha-12"/>
    <property type="match status" value="1"/>
</dbReference>
<dbReference type="FunFam" id="3.40.50.300:FF:000754">
    <property type="entry name" value="Guanine nucleotide-binding protein subunit alpha-13"/>
    <property type="match status" value="1"/>
</dbReference>
<dbReference type="Gene3D" id="1.10.400.10">
    <property type="entry name" value="GI Alpha 1, domain 2-like"/>
    <property type="match status" value="1"/>
</dbReference>
<dbReference type="Gene3D" id="3.40.50.300">
    <property type="entry name" value="P-loop containing nucleotide triphosphate hydrolases"/>
    <property type="match status" value="1"/>
</dbReference>
<dbReference type="InterPro" id="IPR000469">
    <property type="entry name" value="Gprotein_alpha_12/13"/>
</dbReference>
<dbReference type="InterPro" id="IPR001019">
    <property type="entry name" value="Gprotein_alpha_su"/>
</dbReference>
<dbReference type="InterPro" id="IPR011025">
    <property type="entry name" value="GproteinA_insert"/>
</dbReference>
<dbReference type="InterPro" id="IPR027417">
    <property type="entry name" value="P-loop_NTPase"/>
</dbReference>
<dbReference type="PANTHER" id="PTHR10218">
    <property type="entry name" value="GTP-BINDING PROTEIN ALPHA SUBUNIT"/>
    <property type="match status" value="1"/>
</dbReference>
<dbReference type="PANTHER" id="PTHR10218:SF130">
    <property type="entry name" value="GUANINE NUCLEOTIDE-BINDING PROTEIN SUBUNIT ALPHA-12"/>
    <property type="match status" value="1"/>
</dbReference>
<dbReference type="Pfam" id="PF00503">
    <property type="entry name" value="G-alpha"/>
    <property type="match status" value="1"/>
</dbReference>
<dbReference type="PRINTS" id="PR00318">
    <property type="entry name" value="GPROTEINA"/>
</dbReference>
<dbReference type="PRINTS" id="PR00440">
    <property type="entry name" value="GPROTEINA12"/>
</dbReference>
<dbReference type="SMART" id="SM00275">
    <property type="entry name" value="G_alpha"/>
    <property type="match status" value="1"/>
</dbReference>
<dbReference type="SUPFAM" id="SSF52540">
    <property type="entry name" value="P-loop containing nucleoside triphosphate hydrolases"/>
    <property type="match status" value="1"/>
</dbReference>
<dbReference type="SUPFAM" id="SSF47895">
    <property type="entry name" value="Transducin (alpha subunit), insertion domain"/>
    <property type="match status" value="1"/>
</dbReference>
<dbReference type="PROSITE" id="PS51882">
    <property type="entry name" value="G_ALPHA"/>
    <property type="match status" value="1"/>
</dbReference>
<accession>Q03113</accession>
<accession>A4D204</accession>
<accession>B3KXS2</accession>
<accession>B7Z3F7</accession>
<accession>Q2T9L1</accession>
<accession>Q5PPR5</accession>
<accession>Q86UM8</accession>
<accession>Q8TD71</accession>
<accession>Q9UDU9</accession>
<reference key="1">
    <citation type="journal article" date="1993" name="Mol. Cell. Biol.">
        <title>Expression cDNA cloning of a transforming gene encoding the wild-type G alpha 12 gene product.</title>
        <authorList>
            <person name="Chan A.M.-L."/>
            <person name="Fleming T.P."/>
            <person name="McGovern E.S."/>
            <person name="Chedid M."/>
            <person name="Miki T."/>
            <person name="Aaronson S.A."/>
        </authorList>
    </citation>
    <scope>NUCLEOTIDE SEQUENCE [MRNA] (ISOFORM 1)</scope>
</reference>
<reference key="2">
    <citation type="submission" date="2002-03" db="EMBL/GenBank/DDBJ databases">
        <title>cDNA clones of human proteins involved in signal transduction sequenced by the Guthrie cDNA resource center (www.cdna.org).</title>
        <authorList>
            <person name="Puhl H.L. III"/>
            <person name="Ikeda S.R."/>
            <person name="Aronstam R.S."/>
        </authorList>
    </citation>
    <scope>NUCLEOTIDE SEQUENCE [LARGE SCALE MRNA] (ISOFORM 1)</scope>
    <source>
        <tissue>Brain</tissue>
    </source>
</reference>
<reference key="3">
    <citation type="journal article" date="2004" name="Nat. Genet.">
        <title>Complete sequencing and characterization of 21,243 full-length human cDNAs.</title>
        <authorList>
            <person name="Ota T."/>
            <person name="Suzuki Y."/>
            <person name="Nishikawa T."/>
            <person name="Otsuki T."/>
            <person name="Sugiyama T."/>
            <person name="Irie R."/>
            <person name="Wakamatsu A."/>
            <person name="Hayashi K."/>
            <person name="Sato H."/>
            <person name="Nagai K."/>
            <person name="Kimura K."/>
            <person name="Makita H."/>
            <person name="Sekine M."/>
            <person name="Obayashi M."/>
            <person name="Nishi T."/>
            <person name="Shibahara T."/>
            <person name="Tanaka T."/>
            <person name="Ishii S."/>
            <person name="Yamamoto J."/>
            <person name="Saito K."/>
            <person name="Kawai Y."/>
            <person name="Isono Y."/>
            <person name="Nakamura Y."/>
            <person name="Nagahari K."/>
            <person name="Murakami K."/>
            <person name="Yasuda T."/>
            <person name="Iwayanagi T."/>
            <person name="Wagatsuma M."/>
            <person name="Shiratori A."/>
            <person name="Sudo H."/>
            <person name="Hosoiri T."/>
            <person name="Kaku Y."/>
            <person name="Kodaira H."/>
            <person name="Kondo H."/>
            <person name="Sugawara M."/>
            <person name="Takahashi M."/>
            <person name="Kanda K."/>
            <person name="Yokoi T."/>
            <person name="Furuya T."/>
            <person name="Kikkawa E."/>
            <person name="Omura Y."/>
            <person name="Abe K."/>
            <person name="Kamihara K."/>
            <person name="Katsuta N."/>
            <person name="Sato K."/>
            <person name="Tanikawa M."/>
            <person name="Yamazaki M."/>
            <person name="Ninomiya K."/>
            <person name="Ishibashi T."/>
            <person name="Yamashita H."/>
            <person name="Murakawa K."/>
            <person name="Fujimori K."/>
            <person name="Tanai H."/>
            <person name="Kimata M."/>
            <person name="Watanabe M."/>
            <person name="Hiraoka S."/>
            <person name="Chiba Y."/>
            <person name="Ishida S."/>
            <person name="Ono Y."/>
            <person name="Takiguchi S."/>
            <person name="Watanabe S."/>
            <person name="Yosida M."/>
            <person name="Hotuta T."/>
            <person name="Kusano J."/>
            <person name="Kanehori K."/>
            <person name="Takahashi-Fujii A."/>
            <person name="Hara H."/>
            <person name="Tanase T.-O."/>
            <person name="Nomura Y."/>
            <person name="Togiya S."/>
            <person name="Komai F."/>
            <person name="Hara R."/>
            <person name="Takeuchi K."/>
            <person name="Arita M."/>
            <person name="Imose N."/>
            <person name="Musashino K."/>
            <person name="Yuuki H."/>
            <person name="Oshima A."/>
            <person name="Sasaki N."/>
            <person name="Aotsuka S."/>
            <person name="Yoshikawa Y."/>
            <person name="Matsunawa H."/>
            <person name="Ichihara T."/>
            <person name="Shiohata N."/>
            <person name="Sano S."/>
            <person name="Moriya S."/>
            <person name="Momiyama H."/>
            <person name="Satoh N."/>
            <person name="Takami S."/>
            <person name="Terashima Y."/>
            <person name="Suzuki O."/>
            <person name="Nakagawa S."/>
            <person name="Senoh A."/>
            <person name="Mizoguchi H."/>
            <person name="Goto Y."/>
            <person name="Shimizu F."/>
            <person name="Wakebe H."/>
            <person name="Hishigaki H."/>
            <person name="Watanabe T."/>
            <person name="Sugiyama A."/>
            <person name="Takemoto M."/>
            <person name="Kawakami B."/>
            <person name="Yamazaki M."/>
            <person name="Watanabe K."/>
            <person name="Kumagai A."/>
            <person name="Itakura S."/>
            <person name="Fukuzumi Y."/>
            <person name="Fujimori Y."/>
            <person name="Komiyama M."/>
            <person name="Tashiro H."/>
            <person name="Tanigami A."/>
            <person name="Fujiwara T."/>
            <person name="Ono T."/>
            <person name="Yamada K."/>
            <person name="Fujii Y."/>
            <person name="Ozaki K."/>
            <person name="Hirao M."/>
            <person name="Ohmori Y."/>
            <person name="Kawabata A."/>
            <person name="Hikiji T."/>
            <person name="Kobatake N."/>
            <person name="Inagaki H."/>
            <person name="Ikema Y."/>
            <person name="Okamoto S."/>
            <person name="Okitani R."/>
            <person name="Kawakami T."/>
            <person name="Noguchi S."/>
            <person name="Itoh T."/>
            <person name="Shigeta K."/>
            <person name="Senba T."/>
            <person name="Matsumura K."/>
            <person name="Nakajima Y."/>
            <person name="Mizuno T."/>
            <person name="Morinaga M."/>
            <person name="Sasaki M."/>
            <person name="Togashi T."/>
            <person name="Oyama M."/>
            <person name="Hata H."/>
            <person name="Watanabe M."/>
            <person name="Komatsu T."/>
            <person name="Mizushima-Sugano J."/>
            <person name="Satoh T."/>
            <person name="Shirai Y."/>
            <person name="Takahashi Y."/>
            <person name="Nakagawa K."/>
            <person name="Okumura K."/>
            <person name="Nagase T."/>
            <person name="Nomura N."/>
            <person name="Kikuchi H."/>
            <person name="Masuho Y."/>
            <person name="Yamashita R."/>
            <person name="Nakai K."/>
            <person name="Yada T."/>
            <person name="Nakamura Y."/>
            <person name="Ohara O."/>
            <person name="Isogai T."/>
            <person name="Sugano S."/>
        </authorList>
    </citation>
    <scope>NUCLEOTIDE SEQUENCE [LARGE SCALE MRNA] (ISOFORMS 2 AND 3)</scope>
    <source>
        <tissue>Hippocampus</tissue>
        <tissue>Placenta</tissue>
    </source>
</reference>
<reference key="4">
    <citation type="journal article" date="2003" name="Nature">
        <title>The DNA sequence of human chromosome 7.</title>
        <authorList>
            <person name="Hillier L.W."/>
            <person name="Fulton R.S."/>
            <person name="Fulton L.A."/>
            <person name="Graves T.A."/>
            <person name="Pepin K.H."/>
            <person name="Wagner-McPherson C."/>
            <person name="Layman D."/>
            <person name="Maas J."/>
            <person name="Jaeger S."/>
            <person name="Walker R."/>
            <person name="Wylie K."/>
            <person name="Sekhon M."/>
            <person name="Becker M.C."/>
            <person name="O'Laughlin M.D."/>
            <person name="Schaller M.E."/>
            <person name="Fewell G.A."/>
            <person name="Delehaunty K.D."/>
            <person name="Miner T.L."/>
            <person name="Nash W.E."/>
            <person name="Cordes M."/>
            <person name="Du H."/>
            <person name="Sun H."/>
            <person name="Edwards J."/>
            <person name="Bradshaw-Cordum H."/>
            <person name="Ali J."/>
            <person name="Andrews S."/>
            <person name="Isak A."/>
            <person name="Vanbrunt A."/>
            <person name="Nguyen C."/>
            <person name="Du F."/>
            <person name="Lamar B."/>
            <person name="Courtney L."/>
            <person name="Kalicki J."/>
            <person name="Ozersky P."/>
            <person name="Bielicki L."/>
            <person name="Scott K."/>
            <person name="Holmes A."/>
            <person name="Harkins R."/>
            <person name="Harris A."/>
            <person name="Strong C.M."/>
            <person name="Hou S."/>
            <person name="Tomlinson C."/>
            <person name="Dauphin-Kohlberg S."/>
            <person name="Kozlowicz-Reilly A."/>
            <person name="Leonard S."/>
            <person name="Rohlfing T."/>
            <person name="Rock S.M."/>
            <person name="Tin-Wollam A.-M."/>
            <person name="Abbott A."/>
            <person name="Minx P."/>
            <person name="Maupin R."/>
            <person name="Strowmatt C."/>
            <person name="Latreille P."/>
            <person name="Miller N."/>
            <person name="Johnson D."/>
            <person name="Murray J."/>
            <person name="Woessner J.P."/>
            <person name="Wendl M.C."/>
            <person name="Yang S.-P."/>
            <person name="Schultz B.R."/>
            <person name="Wallis J.W."/>
            <person name="Spieth J."/>
            <person name="Bieri T.A."/>
            <person name="Nelson J.O."/>
            <person name="Berkowicz N."/>
            <person name="Wohldmann P.E."/>
            <person name="Cook L.L."/>
            <person name="Hickenbotham M.T."/>
            <person name="Eldred J."/>
            <person name="Williams D."/>
            <person name="Bedell J.A."/>
            <person name="Mardis E.R."/>
            <person name="Clifton S.W."/>
            <person name="Chissoe S.L."/>
            <person name="Marra M.A."/>
            <person name="Raymond C."/>
            <person name="Haugen E."/>
            <person name="Gillett W."/>
            <person name="Zhou Y."/>
            <person name="James R."/>
            <person name="Phelps K."/>
            <person name="Iadanoto S."/>
            <person name="Bubb K."/>
            <person name="Simms E."/>
            <person name="Levy R."/>
            <person name="Clendenning J."/>
            <person name="Kaul R."/>
            <person name="Kent W.J."/>
            <person name="Furey T.S."/>
            <person name="Baertsch R.A."/>
            <person name="Brent M.R."/>
            <person name="Keibler E."/>
            <person name="Flicek P."/>
            <person name="Bork P."/>
            <person name="Suyama M."/>
            <person name="Bailey J.A."/>
            <person name="Portnoy M.E."/>
            <person name="Torrents D."/>
            <person name="Chinwalla A.T."/>
            <person name="Gish W.R."/>
            <person name="Eddy S.R."/>
            <person name="McPherson J.D."/>
            <person name="Olson M.V."/>
            <person name="Eichler E.E."/>
            <person name="Green E.D."/>
            <person name="Waterston R.H."/>
            <person name="Wilson R.K."/>
        </authorList>
    </citation>
    <scope>NUCLEOTIDE SEQUENCE [LARGE SCALE GENOMIC DNA]</scope>
</reference>
<reference key="5">
    <citation type="journal article" date="2003" name="Science">
        <title>Human chromosome 7: DNA sequence and biology.</title>
        <authorList>
            <person name="Scherer S.W."/>
            <person name="Cheung J."/>
            <person name="MacDonald J.R."/>
            <person name="Osborne L.R."/>
            <person name="Nakabayashi K."/>
            <person name="Herbrick J.-A."/>
            <person name="Carson A.R."/>
            <person name="Parker-Katiraee L."/>
            <person name="Skaug J."/>
            <person name="Khaja R."/>
            <person name="Zhang J."/>
            <person name="Hudek A.K."/>
            <person name="Li M."/>
            <person name="Haddad M."/>
            <person name="Duggan G.E."/>
            <person name="Fernandez B.A."/>
            <person name="Kanematsu E."/>
            <person name="Gentles S."/>
            <person name="Christopoulos C.C."/>
            <person name="Choufani S."/>
            <person name="Kwasnicka D."/>
            <person name="Zheng X.H."/>
            <person name="Lai Z."/>
            <person name="Nusskern D.R."/>
            <person name="Zhang Q."/>
            <person name="Gu Z."/>
            <person name="Lu F."/>
            <person name="Zeesman S."/>
            <person name="Nowaczyk M.J."/>
            <person name="Teshima I."/>
            <person name="Chitayat D."/>
            <person name="Shuman C."/>
            <person name="Weksberg R."/>
            <person name="Zackai E.H."/>
            <person name="Grebe T.A."/>
            <person name="Cox S.R."/>
            <person name="Kirkpatrick S.J."/>
            <person name="Rahman N."/>
            <person name="Friedman J.M."/>
            <person name="Heng H.H.Q."/>
            <person name="Pelicci P.G."/>
            <person name="Lo-Coco F."/>
            <person name="Belloni E."/>
            <person name="Shaffer L.G."/>
            <person name="Pober B."/>
            <person name="Morton C.C."/>
            <person name="Gusella J.F."/>
            <person name="Bruns G.A.P."/>
            <person name="Korf B.R."/>
            <person name="Quade B.J."/>
            <person name="Ligon A.H."/>
            <person name="Ferguson H."/>
            <person name="Higgins A.W."/>
            <person name="Leach N.T."/>
            <person name="Herrick S.R."/>
            <person name="Lemyre E."/>
            <person name="Farra C.G."/>
            <person name="Kim H.-G."/>
            <person name="Summers A.M."/>
            <person name="Gripp K.W."/>
            <person name="Roberts W."/>
            <person name="Szatmari P."/>
            <person name="Winsor E.J.T."/>
            <person name="Grzeschik K.-H."/>
            <person name="Teebi A."/>
            <person name="Minassian B.A."/>
            <person name="Kere J."/>
            <person name="Armengol L."/>
            <person name="Pujana M.A."/>
            <person name="Estivill X."/>
            <person name="Wilson M.D."/>
            <person name="Koop B.F."/>
            <person name="Tosi S."/>
            <person name="Moore G.E."/>
            <person name="Boright A.P."/>
            <person name="Zlotorynski E."/>
            <person name="Kerem B."/>
            <person name="Kroisel P.M."/>
            <person name="Petek E."/>
            <person name="Oscier D.G."/>
            <person name="Mould S.J."/>
            <person name="Doehner H."/>
            <person name="Doehner K."/>
            <person name="Rommens J.M."/>
            <person name="Vincent J.B."/>
            <person name="Venter J.C."/>
            <person name="Li P.W."/>
            <person name="Mural R.J."/>
            <person name="Adams M.D."/>
            <person name="Tsui L.-C."/>
        </authorList>
    </citation>
    <scope>NUCLEOTIDE SEQUENCE [LARGE SCALE GENOMIC DNA]</scope>
</reference>
<reference key="6">
    <citation type="journal article" date="2004" name="Genome Res.">
        <title>The status, quality, and expansion of the NIH full-length cDNA project: the Mammalian Gene Collection (MGC).</title>
        <authorList>
            <consortium name="The MGC Project Team"/>
        </authorList>
    </citation>
    <scope>NUCLEOTIDE SEQUENCE [LARGE SCALE MRNA] (ISOFORM 1)</scope>
    <scope>VARIANT GLY-68</scope>
    <source>
        <tissue>Brain</tissue>
        <tissue>Pancreas</tissue>
    </source>
</reference>
<reference key="7">
    <citation type="journal article" date="1999" name="J. Biol. Chem.">
        <title>A novel PDZ domain containing guanine nucleotide exchange factor links heterotrimeric G proteins to Rho.</title>
        <authorList>
            <person name="Fukuhara S."/>
            <person name="Murga C."/>
            <person name="Zohar M."/>
            <person name="Igishi T."/>
            <person name="Gutkind J.S."/>
        </authorList>
    </citation>
    <scope>INTERACTION WITH ARHGEF11</scope>
</reference>
<reference key="8">
    <citation type="journal article" date="2000" name="FEBS Lett.">
        <title>Leukemia-associated Rho guanine nucleotide exchange factor (LARG) links heterotrimeric G proteins of the G(12) family to Rho.</title>
        <authorList>
            <person name="Fukuhara S."/>
            <person name="Chikumi H."/>
            <person name="Gutkind J.S."/>
        </authorList>
    </citation>
    <scope>INTERACTION WITH ARHGEF12</scope>
</reference>
<reference key="9">
    <citation type="journal article" date="2002" name="J. Biol. Chem.">
        <title>Galpha12 and Galpha13 negatively regulate the adhesive functions of cadherin.</title>
        <authorList>
            <person name="Meigs T.E."/>
            <person name="Fedor-Chaiken M."/>
            <person name="Kaplan D.D."/>
            <person name="Brackenbury R."/>
            <person name="Casey P.J."/>
        </authorList>
    </citation>
    <scope>FUNCTION</scope>
</reference>
<reference key="10">
    <citation type="journal article" date="2003" name="Proc. Natl. Acad. Sci. U.S.A.">
        <title>Galpha 12 activates Rho GTPase through tyrosine-phosphorylated leukemia-associated RhoGEF.</title>
        <authorList>
            <person name="Suzuki N."/>
            <person name="Nakamura S."/>
            <person name="Mano H."/>
            <person name="Kozasa T."/>
        </authorList>
    </citation>
    <scope>FUNCTION</scope>
</reference>
<reference key="11">
    <citation type="journal article" date="2004" name="J. Biol. Chem.">
        <title>Galpha12 directly interacts with PP2A: evidence for Galpha12-stimulated PP2A phosphatase activity and dephosphorylation of microtubule-associated protein, tau.</title>
        <authorList>
            <person name="Zhu D."/>
            <person name="Kosik K.S."/>
            <person name="Meigs T.E."/>
            <person name="Yanamadala V."/>
            <person name="Denker B.M."/>
        </authorList>
    </citation>
    <scope>FUNCTION</scope>
    <scope>INTERACTION WITH PPP2R1A</scope>
    <scope>SUBCELLULAR LOCATION</scope>
</reference>
<reference key="12">
    <citation type="journal article" date="2004" name="Proc. Natl. Acad. Sci. U.S.A.">
        <title>A role for Galpha12/Galpha13 in p120ctn regulation.</title>
        <authorList>
            <person name="Krakstad B.F."/>
            <person name="Ardawatia V.V."/>
            <person name="Aragay A.M."/>
        </authorList>
    </citation>
    <scope>FUNCTION</scope>
    <scope>INTERACTION WITH CTNND1</scope>
    <scope>SUBCELLULAR LOCATION</scope>
</reference>
<reference key="13">
    <citation type="journal article" date="2005" name="Biochem. Biophys. Res. Commun.">
        <title>Socius, a novel binding partner of Galpha12/13, promotes the Galpha12-induced RhoA activation.</title>
        <authorList>
            <person name="Tateiwa K."/>
            <person name="Katoh H."/>
            <person name="Negishi M."/>
        </authorList>
    </citation>
    <scope>FUNCTION</scope>
    <scope>INTERACTION WITH UBXD5</scope>
</reference>
<reference key="14">
    <citation type="journal article" date="2005" name="J. Biol. Chem.">
        <title>G alpha12 interaction with alphaSNAP induces VE-cadherin localization at endothelial junctions and regulates barrier function.</title>
        <authorList>
            <person name="Andreeva A.V."/>
            <person name="Kutuzov M.A."/>
            <person name="Vaiskunaite R."/>
            <person name="Profirovic J."/>
            <person name="Meigs T.E."/>
            <person name="Predescu S."/>
            <person name="Malik A.B."/>
            <person name="Voyno-Yasenetskaya T."/>
        </authorList>
    </citation>
    <scope>FUNCTION</scope>
    <scope>INTERACTION WITH NAPA</scope>
    <scope>SUBCELLULAR LOCATION</scope>
</reference>
<reference key="15">
    <citation type="journal article" date="2006" name="J. Biol. Chem.">
        <title>A role for the G12 family of heterotrimeric G proteins in prostate cancer invasion.</title>
        <authorList>
            <person name="Kelly P."/>
            <person name="Stemmle L.N."/>
            <person name="Madden J.F."/>
            <person name="Fields T.A."/>
            <person name="Daaka Y."/>
            <person name="Casey P.J."/>
        </authorList>
    </citation>
    <scope>FUNCTION</scope>
</reference>
<reference key="16">
    <citation type="journal article" date="2006" name="Proc. Natl. Acad. Sci. U.S.A.">
        <title>The G12 family of heterotrimeric G proteins promotes breast cancer invasion and metastasis.</title>
        <authorList>
            <person name="Kelly P."/>
            <person name="Moeller B.J."/>
            <person name="Juneja J."/>
            <person name="Booden M.A."/>
            <person name="Der C.J."/>
            <person name="Daaka Y."/>
            <person name="Dewhirst M.W."/>
            <person name="Fields T.A."/>
            <person name="Casey P.J."/>
        </authorList>
    </citation>
    <scope>FUNCTION</scope>
</reference>
<reference key="17">
    <citation type="journal article" date="2007" name="J. Biol. Chem.">
        <title>Galpha12 stimulates apoptosis in epithelial cells through JNK1-mediated Bcl-2 degradation and up-regulation of IkappaBalpha.</title>
        <authorList>
            <person name="Yanamadala V."/>
            <person name="Negoro H."/>
            <person name="Gunaratnam L."/>
            <person name="Kong T."/>
            <person name="Denker B.M."/>
        </authorList>
    </citation>
    <scope>FUNCTION</scope>
</reference>
<reference key="18">
    <citation type="journal article" date="2008" name="Biol. Reprod.">
        <title>RGS22, a novel testis-specific regulator of G-protein signaling involved in human and mouse spermiogenesis along with GNA12/13 subunits.</title>
        <authorList>
            <person name="Hu Y."/>
            <person name="Xing J."/>
            <person name="Chen L."/>
            <person name="Guo X."/>
            <person name="Du Y."/>
            <person name="Zhao C."/>
            <person name="Zhu Y."/>
            <person name="Lin M."/>
            <person name="Zhou Z."/>
            <person name="Sha J."/>
        </authorList>
    </citation>
    <scope>INTERACTION WITH RGS22</scope>
    <source>
        <tissue>Testis</tissue>
    </source>
</reference>
<reference key="19">
    <citation type="journal article" date="2012" name="Nat. Cell Biol.">
        <title>PRR5L degradation promotes mTORC2-mediated PKC-delta phosphorylation and cell migration downstream of Galpha12.</title>
        <authorList>
            <person name="Gan X."/>
            <person name="Wang J."/>
            <person name="Wang C."/>
            <person name="Sommer E."/>
            <person name="Kozasa T."/>
            <person name="Srinivasula S."/>
            <person name="Alessi D."/>
            <person name="Offermanns S."/>
            <person name="Simon M.I."/>
            <person name="Wu D."/>
        </authorList>
    </citation>
    <scope>FUNCTION IN TOR SIGNALING</scope>
</reference>
<reference key="20">
    <citation type="journal article" date="2013" name="PLoS ONE">
        <title>Galpha(1)(2) drives invasion of oral squamous cell carcinoma through up-regulation of proinflammatory cytokines.</title>
        <authorList>
            <person name="Jian S.L."/>
            <person name="Hsieh H.Y."/>
            <person name="Liao C.T."/>
            <person name="Yen T.C."/>
            <person name="Nien S.W."/>
            <person name="Cheng A.J."/>
            <person name="Juang J.L."/>
        </authorList>
    </citation>
    <scope>FUNCTION</scope>
</reference>
<reference key="21">
    <citation type="journal article" date="2016" name="Biochem. Biophys. Res. Commun.">
        <title>Galpha12/13 signaling promotes cervical cancer invasion through the RhoA/ROCK-JNK signaling axis.</title>
        <authorList>
            <person name="Yuan B."/>
            <person name="Cui J."/>
            <person name="Wang W."/>
            <person name="Deng K."/>
        </authorList>
    </citation>
    <scope>FUNCTION</scope>
</reference>